<protein>
    <recommendedName>
        <fullName>Myb-related protein Zm38</fullName>
    </recommendedName>
</protein>
<name>MYB38_MAIZE</name>
<comment type="function">
    <text evidence="2">Transcription factor that negatively regulates genes involved in anthocyanin biosynthesis.</text>
</comment>
<comment type="subcellular location">
    <subcellularLocation>
        <location evidence="3">Nucleus</location>
    </subcellularLocation>
</comment>
<proteinExistence type="evidence at transcript level"/>
<sequence>MGRSPCCEKAHTNRGAWTKEEDERLVAYIRAHGEGCWRSLPKAAGLLRCGKSCRLRWINYLRPDLKRGNFTADEDDLIVKLHSLLGNKWSLIAARLPGRTDNEIKNYWNTHVRRKLLGRGIDPVTHRPIAADAVTVTTVSFQPSPSAAAAAAAEAEATAAKAPRCPDLNLDLCISPPCQQQEEEEVDLKPSAAVVKREVLLGGRGHGHGHGGALCFGCSLGVQKGAPGCSCSSSNGHRCLGLRGGMLDFRGLKMK</sequence>
<keyword id="KW-0238">DNA-binding</keyword>
<keyword id="KW-0539">Nucleus</keyword>
<keyword id="KW-1185">Reference proteome</keyword>
<keyword id="KW-0677">Repeat</keyword>
<keyword id="KW-0678">Repressor</keyword>
<keyword id="KW-0804">Transcription</keyword>
<keyword id="KW-0805">Transcription regulation</keyword>
<organism>
    <name type="scientific">Zea mays</name>
    <name type="common">Maize</name>
    <dbReference type="NCBI Taxonomy" id="4577"/>
    <lineage>
        <taxon>Eukaryota</taxon>
        <taxon>Viridiplantae</taxon>
        <taxon>Streptophyta</taxon>
        <taxon>Embryophyta</taxon>
        <taxon>Tracheophyta</taxon>
        <taxon>Spermatophyta</taxon>
        <taxon>Magnoliopsida</taxon>
        <taxon>Liliopsida</taxon>
        <taxon>Poales</taxon>
        <taxon>Poaceae</taxon>
        <taxon>PACMAD clade</taxon>
        <taxon>Panicoideae</taxon>
        <taxon>Andropogonodae</taxon>
        <taxon>Andropogoneae</taxon>
        <taxon>Tripsacinae</taxon>
        <taxon>Zea</taxon>
    </lineage>
</organism>
<reference key="1">
    <citation type="journal article" date="1989" name="Mol. Gen. Genet.">
        <title>Multiple genes are transcribed in Hordeum vulgare and Zea mays that carry the DNA binding domain of the myb oncoproteins.</title>
        <authorList>
            <person name="Marocco A."/>
            <person name="Wissenbach M."/>
            <person name="Becker D."/>
            <person name="Paz-Ares J."/>
            <person name="Saedler H."/>
            <person name="Salamini F."/>
            <person name="Rohde W."/>
        </authorList>
    </citation>
    <scope>NUCLEOTIDE SEQUENCE [MRNA]</scope>
</reference>
<reference key="2">
    <citation type="journal article" date="1994" name="Plant J.">
        <title>Molecular analysis of protein domain function encoded by the myb-homologous maize genes C1, Zm 1 and Zm 38.</title>
        <authorList>
            <person name="Franken P."/>
            <person name="Schrell S."/>
            <person name="Peterson P.A."/>
            <person name="Saedler H."/>
            <person name="Wienand U."/>
        </authorList>
    </citation>
    <scope>NUCLEOTIDE SEQUENCE [GENOMIC DNA]</scope>
    <scope>FUNCTION</scope>
</reference>
<evidence type="ECO:0000255" key="1">
    <source>
        <dbReference type="PROSITE-ProRule" id="PRU00625"/>
    </source>
</evidence>
<evidence type="ECO:0000269" key="2">
    <source>
    </source>
</evidence>
<evidence type="ECO:0000305" key="3"/>
<feature type="chain" id="PRO_0000197065" description="Myb-related protein Zm38">
    <location>
        <begin position="1"/>
        <end position="255"/>
    </location>
</feature>
<feature type="domain" description="HTH myb-type 1" evidence="1">
    <location>
        <begin position="9"/>
        <end position="61"/>
    </location>
</feature>
<feature type="domain" description="HTH myb-type 2" evidence="1">
    <location>
        <begin position="62"/>
        <end position="116"/>
    </location>
</feature>
<feature type="DNA-binding region" description="H-T-H motif" evidence="1">
    <location>
        <begin position="37"/>
        <end position="61"/>
    </location>
</feature>
<feature type="DNA-binding region" description="H-T-H motif" evidence="1">
    <location>
        <begin position="89"/>
        <end position="112"/>
    </location>
</feature>
<accession>P20025</accession>
<dbReference type="EMBL" id="X78846">
    <property type="status" value="NOT_ANNOTATED_CDS"/>
    <property type="molecule type" value="Genomic_DNA"/>
</dbReference>
<dbReference type="PIR" id="S04899">
    <property type="entry name" value="S04899"/>
</dbReference>
<dbReference type="SMR" id="P20025"/>
<dbReference type="STRING" id="4577.P20025"/>
<dbReference type="PaxDb" id="4577-GRMZM2G084583_P01"/>
<dbReference type="MaizeGDB" id="69594"/>
<dbReference type="eggNOG" id="KOG0048">
    <property type="taxonomic scope" value="Eukaryota"/>
</dbReference>
<dbReference type="InParanoid" id="P20025"/>
<dbReference type="Proteomes" id="UP000007305">
    <property type="component" value="Unplaced"/>
</dbReference>
<dbReference type="ExpressionAtlas" id="P20025">
    <property type="expression patterns" value="baseline and differential"/>
</dbReference>
<dbReference type="GO" id="GO:0005634">
    <property type="term" value="C:nucleus"/>
    <property type="evidence" value="ECO:0000318"/>
    <property type="project" value="GO_Central"/>
</dbReference>
<dbReference type="GO" id="GO:0000987">
    <property type="term" value="F:cis-regulatory region sequence-specific DNA binding"/>
    <property type="evidence" value="ECO:0000318"/>
    <property type="project" value="GO_Central"/>
</dbReference>
<dbReference type="GO" id="GO:0006355">
    <property type="term" value="P:regulation of DNA-templated transcription"/>
    <property type="evidence" value="ECO:0000318"/>
    <property type="project" value="GO_Central"/>
</dbReference>
<dbReference type="CDD" id="cd00167">
    <property type="entry name" value="SANT"/>
    <property type="match status" value="2"/>
</dbReference>
<dbReference type="FunFam" id="1.10.10.60:FF:000157">
    <property type="entry name" value="Myb transcription factor"/>
    <property type="match status" value="1"/>
</dbReference>
<dbReference type="FunFam" id="1.10.10.60:FF:000001">
    <property type="entry name" value="MYB-related transcription factor"/>
    <property type="match status" value="1"/>
</dbReference>
<dbReference type="Gene3D" id="1.10.10.60">
    <property type="entry name" value="Homeodomain-like"/>
    <property type="match status" value="2"/>
</dbReference>
<dbReference type="InterPro" id="IPR009057">
    <property type="entry name" value="Homeodomain-like_sf"/>
</dbReference>
<dbReference type="InterPro" id="IPR017930">
    <property type="entry name" value="Myb_dom"/>
</dbReference>
<dbReference type="InterPro" id="IPR015495">
    <property type="entry name" value="Myb_TF_plants"/>
</dbReference>
<dbReference type="InterPro" id="IPR001005">
    <property type="entry name" value="SANT/Myb"/>
</dbReference>
<dbReference type="PANTHER" id="PTHR47994">
    <property type="entry name" value="F14D16.11-RELATED"/>
    <property type="match status" value="1"/>
</dbReference>
<dbReference type="PANTHER" id="PTHR47994:SF5">
    <property type="entry name" value="F14D16.11-RELATED"/>
    <property type="match status" value="1"/>
</dbReference>
<dbReference type="Pfam" id="PF00249">
    <property type="entry name" value="Myb_DNA-binding"/>
    <property type="match status" value="2"/>
</dbReference>
<dbReference type="SMART" id="SM00717">
    <property type="entry name" value="SANT"/>
    <property type="match status" value="2"/>
</dbReference>
<dbReference type="SUPFAM" id="SSF46689">
    <property type="entry name" value="Homeodomain-like"/>
    <property type="match status" value="1"/>
</dbReference>
<dbReference type="PROSITE" id="PS51294">
    <property type="entry name" value="HTH_MYB"/>
    <property type="match status" value="2"/>
</dbReference>